<dbReference type="EC" id="6.1.1.15" evidence="1"/>
<dbReference type="EMBL" id="AE002098">
    <property type="protein sequence ID" value="AAF41714.1"/>
    <property type="molecule type" value="Genomic_DNA"/>
</dbReference>
<dbReference type="PIR" id="C81094">
    <property type="entry name" value="C81094"/>
</dbReference>
<dbReference type="RefSeq" id="NP_274358.1">
    <property type="nucleotide sequence ID" value="NC_003112.2"/>
</dbReference>
<dbReference type="RefSeq" id="WP_002222353.1">
    <property type="nucleotide sequence ID" value="NC_003112.2"/>
</dbReference>
<dbReference type="SMR" id="Q9JZ14"/>
<dbReference type="FunCoup" id="Q9JZ14">
    <property type="interactions" value="495"/>
</dbReference>
<dbReference type="STRING" id="122586.NMB1339"/>
<dbReference type="PaxDb" id="122586-NMB1339"/>
<dbReference type="KEGG" id="nme:NMB1339"/>
<dbReference type="PATRIC" id="fig|122586.8.peg.1678"/>
<dbReference type="HOGENOM" id="CLU_016739_0_0_4"/>
<dbReference type="InParanoid" id="Q9JZ14"/>
<dbReference type="OrthoDB" id="9809052at2"/>
<dbReference type="Proteomes" id="UP000000425">
    <property type="component" value="Chromosome"/>
</dbReference>
<dbReference type="GO" id="GO:0005829">
    <property type="term" value="C:cytosol"/>
    <property type="evidence" value="ECO:0000318"/>
    <property type="project" value="GO_Central"/>
</dbReference>
<dbReference type="GO" id="GO:0002161">
    <property type="term" value="F:aminoacyl-tRNA deacylase activity"/>
    <property type="evidence" value="ECO:0007669"/>
    <property type="project" value="InterPro"/>
</dbReference>
<dbReference type="GO" id="GO:0005524">
    <property type="term" value="F:ATP binding"/>
    <property type="evidence" value="ECO:0007669"/>
    <property type="project" value="UniProtKB-UniRule"/>
</dbReference>
<dbReference type="GO" id="GO:0004827">
    <property type="term" value="F:proline-tRNA ligase activity"/>
    <property type="evidence" value="ECO:0000318"/>
    <property type="project" value="GO_Central"/>
</dbReference>
<dbReference type="GO" id="GO:0006433">
    <property type="term" value="P:prolyl-tRNA aminoacylation"/>
    <property type="evidence" value="ECO:0000318"/>
    <property type="project" value="GO_Central"/>
</dbReference>
<dbReference type="CDD" id="cd04334">
    <property type="entry name" value="ProRS-INS"/>
    <property type="match status" value="1"/>
</dbReference>
<dbReference type="CDD" id="cd00861">
    <property type="entry name" value="ProRS_anticodon_short"/>
    <property type="match status" value="1"/>
</dbReference>
<dbReference type="CDD" id="cd00779">
    <property type="entry name" value="ProRS_core_prok"/>
    <property type="match status" value="1"/>
</dbReference>
<dbReference type="FunFam" id="3.30.930.10:FF:000043">
    <property type="entry name" value="Proline--tRNA ligase"/>
    <property type="match status" value="1"/>
</dbReference>
<dbReference type="FunFam" id="3.30.930.10:FF:000097">
    <property type="entry name" value="Proline--tRNA ligase"/>
    <property type="match status" value="1"/>
</dbReference>
<dbReference type="Gene3D" id="3.40.50.800">
    <property type="entry name" value="Anticodon-binding domain"/>
    <property type="match status" value="1"/>
</dbReference>
<dbReference type="Gene3D" id="3.30.930.10">
    <property type="entry name" value="Bira Bifunctional Protein, Domain 2"/>
    <property type="match status" value="2"/>
</dbReference>
<dbReference type="HAMAP" id="MF_01569">
    <property type="entry name" value="Pro_tRNA_synth_type1"/>
    <property type="match status" value="1"/>
</dbReference>
<dbReference type="InterPro" id="IPR002314">
    <property type="entry name" value="aa-tRNA-synt_IIb"/>
</dbReference>
<dbReference type="InterPro" id="IPR006195">
    <property type="entry name" value="aa-tRNA-synth_II"/>
</dbReference>
<dbReference type="InterPro" id="IPR045864">
    <property type="entry name" value="aa-tRNA-synth_II/BPL/LPL"/>
</dbReference>
<dbReference type="InterPro" id="IPR004154">
    <property type="entry name" value="Anticodon-bd"/>
</dbReference>
<dbReference type="InterPro" id="IPR036621">
    <property type="entry name" value="Anticodon-bd_dom_sf"/>
</dbReference>
<dbReference type="InterPro" id="IPR002316">
    <property type="entry name" value="Pro-tRNA-ligase_IIa"/>
</dbReference>
<dbReference type="InterPro" id="IPR004500">
    <property type="entry name" value="Pro-tRNA-synth_IIa_bac-type"/>
</dbReference>
<dbReference type="InterPro" id="IPR023717">
    <property type="entry name" value="Pro-tRNA-Synthase_IIa_type1"/>
</dbReference>
<dbReference type="InterPro" id="IPR050062">
    <property type="entry name" value="Pro-tRNA_synthetase"/>
</dbReference>
<dbReference type="InterPro" id="IPR044140">
    <property type="entry name" value="ProRS_anticodon_short"/>
</dbReference>
<dbReference type="InterPro" id="IPR033730">
    <property type="entry name" value="ProRS_core_prok"/>
</dbReference>
<dbReference type="InterPro" id="IPR036754">
    <property type="entry name" value="YbaK/aa-tRNA-synt-asso_dom_sf"/>
</dbReference>
<dbReference type="InterPro" id="IPR007214">
    <property type="entry name" value="YbaK/aa-tRNA-synth-assoc-dom"/>
</dbReference>
<dbReference type="NCBIfam" id="NF006625">
    <property type="entry name" value="PRK09194.1"/>
    <property type="match status" value="1"/>
</dbReference>
<dbReference type="NCBIfam" id="TIGR00409">
    <property type="entry name" value="proS_fam_II"/>
    <property type="match status" value="1"/>
</dbReference>
<dbReference type="PANTHER" id="PTHR42753">
    <property type="entry name" value="MITOCHONDRIAL RIBOSOME PROTEIN L39/PROLYL-TRNA LIGASE FAMILY MEMBER"/>
    <property type="match status" value="1"/>
</dbReference>
<dbReference type="PANTHER" id="PTHR42753:SF2">
    <property type="entry name" value="PROLINE--TRNA LIGASE"/>
    <property type="match status" value="1"/>
</dbReference>
<dbReference type="Pfam" id="PF03129">
    <property type="entry name" value="HGTP_anticodon"/>
    <property type="match status" value="1"/>
</dbReference>
<dbReference type="Pfam" id="PF00587">
    <property type="entry name" value="tRNA-synt_2b"/>
    <property type="match status" value="1"/>
</dbReference>
<dbReference type="Pfam" id="PF04073">
    <property type="entry name" value="tRNA_edit"/>
    <property type="match status" value="1"/>
</dbReference>
<dbReference type="PIRSF" id="PIRSF001535">
    <property type="entry name" value="ProRS_1"/>
    <property type="match status" value="1"/>
</dbReference>
<dbReference type="PRINTS" id="PR01046">
    <property type="entry name" value="TRNASYNTHPRO"/>
</dbReference>
<dbReference type="SUPFAM" id="SSF52954">
    <property type="entry name" value="Class II aaRS ABD-related"/>
    <property type="match status" value="1"/>
</dbReference>
<dbReference type="SUPFAM" id="SSF55681">
    <property type="entry name" value="Class II aaRS and biotin synthetases"/>
    <property type="match status" value="1"/>
</dbReference>
<dbReference type="SUPFAM" id="SSF55826">
    <property type="entry name" value="YbaK/ProRS associated domain"/>
    <property type="match status" value="1"/>
</dbReference>
<dbReference type="PROSITE" id="PS50862">
    <property type="entry name" value="AA_TRNA_LIGASE_II"/>
    <property type="match status" value="1"/>
</dbReference>
<gene>
    <name evidence="1" type="primary">proS</name>
    <name type="ordered locus">NMB1339</name>
</gene>
<accession>Q9JZ14</accession>
<proteinExistence type="inferred from homology"/>
<sequence length="570" mass="62992">MKASQFFISTLKEAPAEAALASHKLMIRAGLIKANASGLYTWMPMGLRVLRKVENVVREEMARAGSVELLMPVVQPAELWQESGRWEFYGKELLRLKDRHDRDFCMGPTCEEVIADIVRKEINSYKQLPKNFYHIQTKFRDEVRPRFGVMRAREFVMKDAYSFHADYASLQTTYQDMYDAYCRIFTRLGLAFRPVAADTGSIGGTGSHEFQVLAESGEDVIAYSDTSDYAANIELAPTLPLKGERAAAQAELVKVHTPNVKTIDSLVDFLSIPIEKTLKSIVVEGENEGELILLLLRGDHEFNDIKAEKLAGVKSPLTMASPAAIVEQFGANGGSLGPVGFAGKVYADFATEKGADWVIGANEDDYHYTGFNFGRDAAEPEFVDLRNVVEGDESPDGQGRLKLARGIEVGHVFQLRDKYTQAMNVSFLDNNGKSQIMEMGCYGIGITRVVAAAIEQNNDEKGIIWTKAMAPFEVVIVPMNYKKSDTVREAADKIYAELLAAGADVLLDDRDERAGVLLNDSELLGIPHRIVIGDRALKEGNVEYAERRDNEAQAVAIGEIVARVTASLNA</sequence>
<feature type="chain" id="PRO_0000248728" description="Proline--tRNA ligase">
    <location>
        <begin position="1"/>
        <end position="570"/>
    </location>
</feature>
<name>SYP_NEIMB</name>
<keyword id="KW-0030">Aminoacyl-tRNA synthetase</keyword>
<keyword id="KW-0067">ATP-binding</keyword>
<keyword id="KW-0963">Cytoplasm</keyword>
<keyword id="KW-0436">Ligase</keyword>
<keyword id="KW-0547">Nucleotide-binding</keyword>
<keyword id="KW-0648">Protein biosynthesis</keyword>
<keyword id="KW-1185">Reference proteome</keyword>
<reference key="1">
    <citation type="journal article" date="2000" name="Science">
        <title>Complete genome sequence of Neisseria meningitidis serogroup B strain MC58.</title>
        <authorList>
            <person name="Tettelin H."/>
            <person name="Saunders N.J."/>
            <person name="Heidelberg J.F."/>
            <person name="Jeffries A.C."/>
            <person name="Nelson K.E."/>
            <person name="Eisen J.A."/>
            <person name="Ketchum K.A."/>
            <person name="Hood D.W."/>
            <person name="Peden J.F."/>
            <person name="Dodson R.J."/>
            <person name="Nelson W.C."/>
            <person name="Gwinn M.L."/>
            <person name="DeBoy R.T."/>
            <person name="Peterson J.D."/>
            <person name="Hickey E.K."/>
            <person name="Haft D.H."/>
            <person name="Salzberg S.L."/>
            <person name="White O."/>
            <person name="Fleischmann R.D."/>
            <person name="Dougherty B.A."/>
            <person name="Mason T.M."/>
            <person name="Ciecko A."/>
            <person name="Parksey D.S."/>
            <person name="Blair E."/>
            <person name="Cittone H."/>
            <person name="Clark E.B."/>
            <person name="Cotton M.D."/>
            <person name="Utterback T.R."/>
            <person name="Khouri H.M."/>
            <person name="Qin H."/>
            <person name="Vamathevan J.J."/>
            <person name="Gill J."/>
            <person name="Scarlato V."/>
            <person name="Masignani V."/>
            <person name="Pizza M."/>
            <person name="Grandi G."/>
            <person name="Sun L."/>
            <person name="Smith H.O."/>
            <person name="Fraser C.M."/>
            <person name="Moxon E.R."/>
            <person name="Rappuoli R."/>
            <person name="Venter J.C."/>
        </authorList>
    </citation>
    <scope>NUCLEOTIDE SEQUENCE [LARGE SCALE GENOMIC DNA]</scope>
    <source>
        <strain>ATCC BAA-335 / MC58</strain>
    </source>
</reference>
<protein>
    <recommendedName>
        <fullName evidence="1">Proline--tRNA ligase</fullName>
        <ecNumber evidence="1">6.1.1.15</ecNumber>
    </recommendedName>
    <alternativeName>
        <fullName evidence="1">Prolyl-tRNA synthetase</fullName>
        <shortName evidence="1">ProRS</shortName>
    </alternativeName>
</protein>
<comment type="function">
    <text evidence="1">Catalyzes the attachment of proline to tRNA(Pro) in a two-step reaction: proline is first activated by ATP to form Pro-AMP and then transferred to the acceptor end of tRNA(Pro). As ProRS can inadvertently accommodate and process non-cognate amino acids such as alanine and cysteine, to avoid such errors it has two additional distinct editing activities against alanine. One activity is designated as 'pretransfer' editing and involves the tRNA(Pro)-independent hydrolysis of activated Ala-AMP. The other activity is designated 'posttransfer' editing and involves deacylation of mischarged Ala-tRNA(Pro). The misacylated Cys-tRNA(Pro) is not edited by ProRS.</text>
</comment>
<comment type="catalytic activity">
    <reaction evidence="1">
        <text>tRNA(Pro) + L-proline + ATP = L-prolyl-tRNA(Pro) + AMP + diphosphate</text>
        <dbReference type="Rhea" id="RHEA:14305"/>
        <dbReference type="Rhea" id="RHEA-COMP:9700"/>
        <dbReference type="Rhea" id="RHEA-COMP:9702"/>
        <dbReference type="ChEBI" id="CHEBI:30616"/>
        <dbReference type="ChEBI" id="CHEBI:33019"/>
        <dbReference type="ChEBI" id="CHEBI:60039"/>
        <dbReference type="ChEBI" id="CHEBI:78442"/>
        <dbReference type="ChEBI" id="CHEBI:78532"/>
        <dbReference type="ChEBI" id="CHEBI:456215"/>
        <dbReference type="EC" id="6.1.1.15"/>
    </reaction>
</comment>
<comment type="subunit">
    <text evidence="1">Homodimer.</text>
</comment>
<comment type="subcellular location">
    <subcellularLocation>
        <location evidence="1">Cytoplasm</location>
    </subcellularLocation>
</comment>
<comment type="domain">
    <text evidence="1">Consists of three domains: the N-terminal catalytic domain, the editing domain and the C-terminal anticodon-binding domain.</text>
</comment>
<comment type="similarity">
    <text evidence="1">Belongs to the class-II aminoacyl-tRNA synthetase family. ProS type 1 subfamily.</text>
</comment>
<evidence type="ECO:0000255" key="1">
    <source>
        <dbReference type="HAMAP-Rule" id="MF_01569"/>
    </source>
</evidence>
<organism>
    <name type="scientific">Neisseria meningitidis serogroup B (strain ATCC BAA-335 / MC58)</name>
    <dbReference type="NCBI Taxonomy" id="122586"/>
    <lineage>
        <taxon>Bacteria</taxon>
        <taxon>Pseudomonadati</taxon>
        <taxon>Pseudomonadota</taxon>
        <taxon>Betaproteobacteria</taxon>
        <taxon>Neisseriales</taxon>
        <taxon>Neisseriaceae</taxon>
        <taxon>Neisseria</taxon>
    </lineage>
</organism>